<keyword id="KW-0325">Glycoprotein</keyword>
<keyword id="KW-0378">Hydrolase</keyword>
<keyword id="KW-0472">Membrane</keyword>
<keyword id="KW-0511">Multifunctional enzyme</keyword>
<keyword id="KW-0597">Phosphoprotein</keyword>
<keyword id="KW-1185">Reference proteome</keyword>
<keyword id="KW-0735">Signal-anchor</keyword>
<keyword id="KW-0812">Transmembrane</keyword>
<keyword id="KW-1133">Transmembrane helix</keyword>
<gene>
    <name type="primary">NPP1</name>
    <name type="ordered locus">YCR026C</name>
    <name type="ORF">YCR246</name>
    <name type="ORF">YCR26C</name>
</gene>
<reference key="1">
    <citation type="journal article" date="1992" name="Nature">
        <title>The complete DNA sequence of yeast chromosome III.</title>
        <authorList>
            <person name="Oliver S.G."/>
            <person name="van der Aart Q.J.M."/>
            <person name="Agostoni-Carbone M.L."/>
            <person name="Aigle M."/>
            <person name="Alberghina L."/>
            <person name="Alexandraki D."/>
            <person name="Antoine G."/>
            <person name="Anwar R."/>
            <person name="Ballesta J.P.G."/>
            <person name="Benit P."/>
            <person name="Berben G."/>
            <person name="Bergantino E."/>
            <person name="Biteau N."/>
            <person name="Bolle P.-A."/>
            <person name="Bolotin-Fukuhara M."/>
            <person name="Brown A."/>
            <person name="Brown A.J.P."/>
            <person name="Buhler J.-M."/>
            <person name="Carcano C."/>
            <person name="Carignani G."/>
            <person name="Cederberg H."/>
            <person name="Chanet R."/>
            <person name="Contreras R."/>
            <person name="Crouzet M."/>
            <person name="Daignan-Fornier B."/>
            <person name="Defoor E."/>
            <person name="Delgado M.D."/>
            <person name="Demolder J."/>
            <person name="Doira C."/>
            <person name="Dubois E."/>
            <person name="Dujon B."/>
            <person name="Duesterhoeft A."/>
            <person name="Erdmann D."/>
            <person name="Esteban M."/>
            <person name="Fabre F."/>
            <person name="Fairhead C."/>
            <person name="Faye G."/>
            <person name="Feldmann H."/>
            <person name="Fiers W."/>
            <person name="Francingues-Gaillard M.-C."/>
            <person name="Franco L."/>
            <person name="Frontali L."/>
            <person name="Fukuhara H."/>
            <person name="Fuller L.J."/>
            <person name="Galland P."/>
            <person name="Gent M.E."/>
            <person name="Gigot D."/>
            <person name="Gilliquet V."/>
            <person name="Glansdorff N."/>
            <person name="Goffeau A."/>
            <person name="Grenson M."/>
            <person name="Grisanti P."/>
            <person name="Grivell L.A."/>
            <person name="de Haan M."/>
            <person name="Haasemann M."/>
            <person name="Hatat D."/>
            <person name="Hoenicka J."/>
            <person name="Hegemann J.H."/>
            <person name="Herbert C.J."/>
            <person name="Hilger F."/>
            <person name="Hohmann S."/>
            <person name="Hollenberg C.P."/>
            <person name="Huse K."/>
            <person name="Iborra F."/>
            <person name="Indge K.J."/>
            <person name="Isono K."/>
            <person name="Jacq C."/>
            <person name="Jacquet M."/>
            <person name="James C.M."/>
            <person name="Jauniaux J.-C."/>
            <person name="Jia Y."/>
            <person name="Jimenez A."/>
            <person name="Kelly A."/>
            <person name="Kleinhans U."/>
            <person name="Kreisl P."/>
            <person name="Lanfranchi G."/>
            <person name="Lewis C."/>
            <person name="van der Linden C.G."/>
            <person name="Lucchini G."/>
            <person name="Lutzenkirchen K."/>
            <person name="Maat M.J."/>
            <person name="Mallet L."/>
            <person name="Mannhaupt G."/>
            <person name="Martegani E."/>
            <person name="Mathieu A."/>
            <person name="Maurer C.T.C."/>
            <person name="McConnell D."/>
            <person name="McKee R.A."/>
            <person name="Messenguy F."/>
            <person name="Mewes H.-W."/>
            <person name="Molemans F."/>
            <person name="Montague M.A."/>
            <person name="Muzi Falconi M."/>
            <person name="Navas L."/>
            <person name="Newlon C.S."/>
            <person name="Noone D."/>
            <person name="Pallier C."/>
            <person name="Panzeri L."/>
            <person name="Pearson B.M."/>
            <person name="Perea J."/>
            <person name="Philippsen P."/>
            <person name="Pierard A."/>
            <person name="Planta R.J."/>
            <person name="Plevani P."/>
            <person name="Poetsch B."/>
            <person name="Pohl F.M."/>
            <person name="Purnelle B."/>
            <person name="Ramezani Rad M."/>
            <person name="Rasmussen S.W."/>
            <person name="Raynal A."/>
            <person name="Remacha M.A."/>
            <person name="Richterich P."/>
            <person name="Roberts A.B."/>
            <person name="Rodriguez F."/>
            <person name="Sanz E."/>
            <person name="Schaaff-Gerstenschlaeger I."/>
            <person name="Scherens B."/>
            <person name="Schweitzer B."/>
            <person name="Shu Y."/>
            <person name="Skala J."/>
            <person name="Slonimski P.P."/>
            <person name="Sor F."/>
            <person name="Soustelle C."/>
            <person name="Spiegelberg R."/>
            <person name="Stateva L.I."/>
            <person name="Steensma H.Y."/>
            <person name="Steiner S."/>
            <person name="Thierry A."/>
            <person name="Thireos G."/>
            <person name="Tzermia M."/>
            <person name="Urrestarazu L.A."/>
            <person name="Valle G."/>
            <person name="Vetter I."/>
            <person name="van Vliet-Reedijk J.C."/>
            <person name="Voet M."/>
            <person name="Volckaert G."/>
            <person name="Vreken P."/>
            <person name="Wang H."/>
            <person name="Warmington J.R."/>
            <person name="von Wettstein D."/>
            <person name="Wicksteed B.L."/>
            <person name="Wilson C."/>
            <person name="Wurst H."/>
            <person name="Xu G."/>
            <person name="Yoshikawa A."/>
            <person name="Zimmermann F.K."/>
            <person name="Sgouros J.G."/>
        </authorList>
    </citation>
    <scope>NUCLEOTIDE SEQUENCE [LARGE SCALE GENOMIC DNA]</scope>
    <source>
        <strain>ATCC 204508 / S288c</strain>
    </source>
</reference>
<reference key="2">
    <citation type="submission" date="2001-06" db="EMBL/GenBank/DDBJ databases">
        <authorList>
            <person name="Valles G."/>
            <person name="Volckaerts G."/>
        </authorList>
    </citation>
    <scope>SEQUENCE REVISION</scope>
</reference>
<reference key="3">
    <citation type="journal article" date="2014" name="G3 (Bethesda)">
        <title>The reference genome sequence of Saccharomyces cerevisiae: Then and now.</title>
        <authorList>
            <person name="Engel S.R."/>
            <person name="Dietrich F.S."/>
            <person name="Fisk D.G."/>
            <person name="Binkley G."/>
            <person name="Balakrishnan R."/>
            <person name="Costanzo M.C."/>
            <person name="Dwight S.S."/>
            <person name="Hitz B.C."/>
            <person name="Karra K."/>
            <person name="Nash R.S."/>
            <person name="Weng S."/>
            <person name="Wong E.D."/>
            <person name="Lloyd P."/>
            <person name="Skrzypek M.S."/>
            <person name="Miyasato S.R."/>
            <person name="Simison M."/>
            <person name="Cherry J.M."/>
        </authorList>
    </citation>
    <scope>GENOME REANNOTATION</scope>
    <source>
        <strain>ATCC 204508 / S288c</strain>
    </source>
</reference>
<reference key="4">
    <citation type="journal article" date="1992" name="Yeast">
        <title>The complete sequence of K3B, a 7.9 kb fragment between PGK1 and CRY1 on chromosome III, reveals the presence of seven open reading frames.</title>
        <authorList>
            <person name="Bolle P.-A."/>
            <person name="Gilliquet V."/>
            <person name="Berben G."/>
            <person name="Dumont J."/>
            <person name="Hilger F."/>
        </authorList>
    </citation>
    <scope>NUCLEOTIDE SEQUENCE [GENOMIC DNA] OF 244-742</scope>
</reference>
<reference key="5">
    <citation type="journal article" date="2003" name="Nature">
        <title>Global analysis of protein expression in yeast.</title>
        <authorList>
            <person name="Ghaemmaghami S."/>
            <person name="Huh W.-K."/>
            <person name="Bower K."/>
            <person name="Howson R.W."/>
            <person name="Belle A."/>
            <person name="Dephoure N."/>
            <person name="O'Shea E.K."/>
            <person name="Weissman J.S."/>
        </authorList>
    </citation>
    <scope>LEVEL OF PROTEIN EXPRESSION [LARGE SCALE ANALYSIS]</scope>
</reference>
<reference key="6">
    <citation type="journal article" date="2005" name="Eukaryot. Cell">
        <title>Pho5p and newly identified nucleotide pyrophosphatases/ phosphodiesterases regulate extracellular nucleotide phosphate metabolism in Saccharomyces cerevisiae.</title>
        <authorList>
            <person name="Kennedy E.J."/>
            <person name="Pillus L."/>
            <person name="Ghosh G."/>
        </authorList>
    </citation>
    <scope>FUNCTION</scope>
    <scope>NPP ACTIVITY</scope>
    <scope>INDUCTION</scope>
    <scope>AUTOPHOSPHORYLATION</scope>
</reference>
<reference key="7">
    <citation type="journal article" date="2009" name="Mol. Syst. Biol.">
        <title>Global analysis of the glycoproteome in Saccharomyces cerevisiae reveals new roles for protein glycosylation in eukaryotes.</title>
        <authorList>
            <person name="Kung L.A."/>
            <person name="Tao S.-C."/>
            <person name="Qian J."/>
            <person name="Smith M.G."/>
            <person name="Snyder M."/>
            <person name="Zhu H."/>
        </authorList>
    </citation>
    <scope>GLYCOSYLATION [LARGE SCALE ANALYSIS]</scope>
</reference>
<protein>
    <recommendedName>
        <fullName>Ectonucleotide pyrophosphatase/phosphodiesterase 1</fullName>
        <shortName>E-NPP 1</shortName>
    </recommendedName>
    <domain>
        <recommendedName>
            <fullName>Alkaline phosphodiesterase 1</fullName>
            <ecNumber evidence="7">3.1.4.1</ecNumber>
        </recommendedName>
    </domain>
    <domain>
        <recommendedName>
            <fullName>Nucleotide pyrophosphatase</fullName>
            <shortName>NPPase</shortName>
            <ecNumber evidence="7">3.6.1.9</ecNumber>
        </recommendedName>
        <alternativeName>
            <fullName evidence="7">Nucleotide diphosphatase</fullName>
        </alternativeName>
    </domain>
</protein>
<accession>P25353</accession>
<accession>D6VR36</accession>
<accession>Q8NIL9</accession>
<comment type="function">
    <text evidence="5">Mediates extracellular nucleotide derived phosphate hydrolysis along with NPP2 and PHO5.</text>
</comment>
<comment type="catalytic activity">
    <reaction evidence="7">
        <text>Hydrolytically removes 5'-nucleotides successively from the 3'-hydroxy termini of 3'-hydroxy-terminated oligonucleotides.</text>
        <dbReference type="EC" id="3.1.4.1"/>
    </reaction>
</comment>
<comment type="catalytic activity">
    <reaction evidence="7">
        <text>a ribonucleoside 5'-triphosphate + H2O = a ribonucleoside 5'-phosphate + diphosphate + H(+)</text>
        <dbReference type="Rhea" id="RHEA:23996"/>
        <dbReference type="ChEBI" id="CHEBI:15377"/>
        <dbReference type="ChEBI" id="CHEBI:15378"/>
        <dbReference type="ChEBI" id="CHEBI:33019"/>
        <dbReference type="ChEBI" id="CHEBI:58043"/>
        <dbReference type="ChEBI" id="CHEBI:61557"/>
        <dbReference type="EC" id="3.6.1.9"/>
    </reaction>
</comment>
<comment type="catalytic activity">
    <reaction evidence="7">
        <text>a 2'-deoxyribonucleoside 5'-triphosphate + H2O = a 2'-deoxyribonucleoside 5'-phosphate + diphosphate + H(+)</text>
        <dbReference type="Rhea" id="RHEA:44644"/>
        <dbReference type="ChEBI" id="CHEBI:15377"/>
        <dbReference type="ChEBI" id="CHEBI:15378"/>
        <dbReference type="ChEBI" id="CHEBI:33019"/>
        <dbReference type="ChEBI" id="CHEBI:61560"/>
        <dbReference type="ChEBI" id="CHEBI:65317"/>
        <dbReference type="EC" id="3.6.1.9"/>
    </reaction>
</comment>
<comment type="subcellular location">
    <subcellularLocation>
        <location evidence="7">Membrane</location>
        <topology evidence="7">Single-pass type II membrane protein</topology>
    </subcellularLocation>
</comment>
<comment type="induction">
    <text evidence="5">Up-regulated during phosphate starvation.</text>
</comment>
<comment type="PTM">
    <text>Autophosphorylated as part of the catalytic cycle of phosphodiesterase/pyrophosphatase activity.</text>
</comment>
<comment type="PTM">
    <text evidence="6">N-glycosylated.</text>
</comment>
<comment type="miscellaneous">
    <text evidence="4">Present with 3420 molecules/cell in log phase SD medium.</text>
</comment>
<comment type="similarity">
    <text evidence="7">Belongs to the nucleotide pyrophosphatase/phosphodiesterase family.</text>
</comment>
<name>NPP1_YEAST</name>
<evidence type="ECO:0000250" key="1"/>
<evidence type="ECO:0000255" key="2"/>
<evidence type="ECO:0000256" key="3">
    <source>
        <dbReference type="SAM" id="MobiDB-lite"/>
    </source>
</evidence>
<evidence type="ECO:0000269" key="4">
    <source>
    </source>
</evidence>
<evidence type="ECO:0000269" key="5">
    <source>
    </source>
</evidence>
<evidence type="ECO:0000269" key="6">
    <source>
    </source>
</evidence>
<evidence type="ECO:0000305" key="7"/>
<feature type="chain" id="PRO_0000202566" description="Ectonucleotide pyrophosphatase/phosphodiesterase 1">
    <location>
        <begin position="1"/>
        <end position="742"/>
    </location>
</feature>
<feature type="topological domain" description="Cytoplasmic" evidence="2">
    <location>
        <begin position="1"/>
        <end position="113"/>
    </location>
</feature>
<feature type="transmembrane region" description="Helical" evidence="2">
    <location>
        <begin position="114"/>
        <end position="134"/>
    </location>
</feature>
<feature type="topological domain" description="Extracellular" evidence="2">
    <location>
        <begin position="135"/>
        <end position="742"/>
    </location>
</feature>
<feature type="region of interest" description="Phosphodiesterase">
    <location>
        <begin position="168"/>
        <end position="545"/>
    </location>
</feature>
<feature type="region of interest" description="Disordered" evidence="3">
    <location>
        <begin position="640"/>
        <end position="670"/>
    </location>
</feature>
<feature type="region of interest" description="Disordered" evidence="3">
    <location>
        <begin position="686"/>
        <end position="711"/>
    </location>
</feature>
<feature type="compositionally biased region" description="Acidic residues" evidence="3">
    <location>
        <begin position="640"/>
        <end position="659"/>
    </location>
</feature>
<feature type="compositionally biased region" description="Low complexity" evidence="3">
    <location>
        <begin position="691"/>
        <end position="711"/>
    </location>
</feature>
<feature type="active site" description="Nucleophile" evidence="1">
    <location>
        <position position="219"/>
    </location>
</feature>
<feature type="glycosylation site" description="N-linked (GlcNAc...) asparagine" evidence="2">
    <location>
        <position position="161"/>
    </location>
</feature>
<feature type="glycosylation site" description="N-linked (GlcNAc...) asparagine" evidence="2">
    <location>
        <position position="204"/>
    </location>
</feature>
<feature type="glycosylation site" description="N-linked (GlcNAc...) asparagine" evidence="2">
    <location>
        <position position="264"/>
    </location>
</feature>
<feature type="glycosylation site" description="N-linked (GlcNAc...) asparagine" evidence="2">
    <location>
        <position position="296"/>
    </location>
</feature>
<feature type="glycosylation site" description="N-linked (GlcNAc...) asparagine" evidence="2">
    <location>
        <position position="403"/>
    </location>
</feature>
<dbReference type="EC" id="3.1.4.1" evidence="7"/>
<dbReference type="EC" id="3.6.1.9" evidence="7"/>
<dbReference type="EMBL" id="X59720">
    <property type="protein sequence ID" value="CAC42978.1"/>
    <property type="molecule type" value="Genomic_DNA"/>
</dbReference>
<dbReference type="EMBL" id="BK006937">
    <property type="protein sequence ID" value="DAA07505.1"/>
    <property type="molecule type" value="Genomic_DNA"/>
</dbReference>
<dbReference type="PIR" id="S19437">
    <property type="entry name" value="S19437"/>
</dbReference>
<dbReference type="PIR" id="S27380">
    <property type="entry name" value="S27380"/>
</dbReference>
<dbReference type="RefSeq" id="NP_009955.2">
    <property type="nucleotide sequence ID" value="NM_001178741.1"/>
</dbReference>
<dbReference type="SMR" id="P25353"/>
<dbReference type="BioGRID" id="31008">
    <property type="interactions" value="77"/>
</dbReference>
<dbReference type="FunCoup" id="P25353">
    <property type="interactions" value="243"/>
</dbReference>
<dbReference type="STRING" id="4932.YCR026C"/>
<dbReference type="GlyCosmos" id="P25353">
    <property type="glycosylation" value="5 sites, No reported glycans"/>
</dbReference>
<dbReference type="GlyGen" id="P25353">
    <property type="glycosylation" value="5 sites"/>
</dbReference>
<dbReference type="iPTMnet" id="P25353"/>
<dbReference type="PaxDb" id="4932-YCR026C"/>
<dbReference type="PeptideAtlas" id="P25353"/>
<dbReference type="EnsemblFungi" id="YCR026C_mRNA">
    <property type="protein sequence ID" value="YCR026C"/>
    <property type="gene ID" value="YCR026C"/>
</dbReference>
<dbReference type="GeneID" id="850391"/>
<dbReference type="KEGG" id="sce:YCR026C"/>
<dbReference type="AGR" id="SGD:S000000621"/>
<dbReference type="SGD" id="S000000621">
    <property type="gene designation" value="NPP1"/>
</dbReference>
<dbReference type="VEuPathDB" id="FungiDB:YCR026C"/>
<dbReference type="eggNOG" id="KOG2645">
    <property type="taxonomic scope" value="Eukaryota"/>
</dbReference>
<dbReference type="GeneTree" id="ENSGT00940000167607"/>
<dbReference type="HOGENOM" id="CLU_017594_3_1_1"/>
<dbReference type="InParanoid" id="P25353"/>
<dbReference type="OMA" id="SEPIWET"/>
<dbReference type="OrthoDB" id="415411at2759"/>
<dbReference type="BioCyc" id="YEAST:G3O-29341-MONOMER"/>
<dbReference type="Reactome" id="R-SCE-196843">
    <property type="pathway name" value="Vitamin B2 (riboflavin) metabolism"/>
</dbReference>
<dbReference type="Reactome" id="R-SCE-6798695">
    <property type="pathway name" value="Neutrophil degranulation"/>
</dbReference>
<dbReference type="Reactome" id="R-SCE-6814848">
    <property type="pathway name" value="Glycerophospholipid catabolism"/>
</dbReference>
<dbReference type="Reactome" id="R-SCE-9840310">
    <property type="pathway name" value="Glycosphingolipid catabolism"/>
</dbReference>
<dbReference type="BioGRID-ORCS" id="850391">
    <property type="hits" value="0 hits in 10 CRISPR screens"/>
</dbReference>
<dbReference type="PRO" id="PR:P25353"/>
<dbReference type="Proteomes" id="UP000002311">
    <property type="component" value="Chromosome III"/>
</dbReference>
<dbReference type="RNAct" id="P25353">
    <property type="molecule type" value="protein"/>
</dbReference>
<dbReference type="GO" id="GO:0016020">
    <property type="term" value="C:membrane"/>
    <property type="evidence" value="ECO:0007669"/>
    <property type="project" value="UniProtKB-SubCell"/>
</dbReference>
<dbReference type="GO" id="GO:0047429">
    <property type="term" value="F:nucleoside triphosphate diphosphatase activity"/>
    <property type="evidence" value="ECO:0000314"/>
    <property type="project" value="SGD"/>
</dbReference>
<dbReference type="GO" id="GO:0004528">
    <property type="term" value="F:phosphodiesterase I activity"/>
    <property type="evidence" value="ECO:0007669"/>
    <property type="project" value="UniProtKB-EC"/>
</dbReference>
<dbReference type="GO" id="GO:0017111">
    <property type="term" value="F:ribonucleoside triphosphate phosphatase activity"/>
    <property type="evidence" value="ECO:0000315"/>
    <property type="project" value="SGD"/>
</dbReference>
<dbReference type="GO" id="GO:0016036">
    <property type="term" value="P:cellular response to phosphate starvation"/>
    <property type="evidence" value="ECO:0000315"/>
    <property type="project" value="SGD"/>
</dbReference>
<dbReference type="GO" id="GO:0009141">
    <property type="term" value="P:nucleoside triphosphate metabolic process"/>
    <property type="evidence" value="ECO:0000315"/>
    <property type="project" value="SGD"/>
</dbReference>
<dbReference type="CDD" id="cd16018">
    <property type="entry name" value="Enpp"/>
    <property type="match status" value="1"/>
</dbReference>
<dbReference type="Gene3D" id="3.30.1360.180">
    <property type="match status" value="1"/>
</dbReference>
<dbReference type="Gene3D" id="3.40.720.10">
    <property type="entry name" value="Alkaline Phosphatase, subunit A"/>
    <property type="match status" value="1"/>
</dbReference>
<dbReference type="InterPro" id="IPR017850">
    <property type="entry name" value="Alkaline_phosphatase_core_sf"/>
</dbReference>
<dbReference type="InterPro" id="IPR002591">
    <property type="entry name" value="Phosphodiest/P_Trfase"/>
</dbReference>
<dbReference type="PANTHER" id="PTHR10151:SF120">
    <property type="entry name" value="BIS(5'-ADENOSYL)-TRIPHOSPHATASE"/>
    <property type="match status" value="1"/>
</dbReference>
<dbReference type="PANTHER" id="PTHR10151">
    <property type="entry name" value="ECTONUCLEOTIDE PYROPHOSPHATASE/PHOSPHODIESTERASE"/>
    <property type="match status" value="1"/>
</dbReference>
<dbReference type="Pfam" id="PF01663">
    <property type="entry name" value="Phosphodiest"/>
    <property type="match status" value="1"/>
</dbReference>
<dbReference type="SUPFAM" id="SSF53649">
    <property type="entry name" value="Alkaline phosphatase-like"/>
    <property type="match status" value="1"/>
</dbReference>
<sequence>MELQNDLESLDNELNDFSEDPFRDDFITDEDAVRSGWRSAWTRMKYWFYKNRLKWTNNPIVIGDAKDSRDGSNFRRGIPLYELDANGQPIDTELVDENELSFGTGFHSKVPFKIIFRTLFGSLVFAIFLILMINIAKPHHSTRVLSHFGSPEFDPYVKYFNGTHEFFPLTIVISLDGFHPSLISKRNTPFLHDLYELKYDGGMNITSTPFMVPSFPTETFPNHWTLVTGQYPIHHGIVSNVFWDPDLNEEFHPGVLDPRIWNNNDTEPIWQTVQSAFDGDIPFKAATHMWPGSDVNYTKYNEEKLQPEHKNPIARERTPFYFDEFNAKEPLSQKLSKIIEYVDMSTLNERPQLILGYVPNVDAFGHKHGYPSESEYYYEDFTETLGEVDTFLKQLVESLQERNLTSFTNLVIVSDHGMSDIVVPSNVIIWEDLLDEKLRKDYVSHAYLEGPMMAISLKDSGNINEVYHNLKTSIDEDKYTVYVNGNFPKEWNFNDGKNHHMASIWIVPEPGYAVMKKEQLKKVAKGDHKDKNEDNVFTIGSHGYDNNAIDMRSVFIGMGPYFPQGYIEPFQNTEIYNLLCDICGVAEKDRNSNDGTGMLMNQLREPQSSEEVEIEDDFDYLVSKFGEFSTYNIIWGGYPEETEQDNVDNDNDDNDDGNTDEIAAMPSSSLTIKLEMTTSIPSATETLLGETSPSSRSSSSSSIQASATASTVGDWLQDIINDAKDLIDDIIDSIDDLVDSDT</sequence>
<proteinExistence type="evidence at protein level"/>
<organism>
    <name type="scientific">Saccharomyces cerevisiae (strain ATCC 204508 / S288c)</name>
    <name type="common">Baker's yeast</name>
    <dbReference type="NCBI Taxonomy" id="559292"/>
    <lineage>
        <taxon>Eukaryota</taxon>
        <taxon>Fungi</taxon>
        <taxon>Dikarya</taxon>
        <taxon>Ascomycota</taxon>
        <taxon>Saccharomycotina</taxon>
        <taxon>Saccharomycetes</taxon>
        <taxon>Saccharomycetales</taxon>
        <taxon>Saccharomycetaceae</taxon>
        <taxon>Saccharomyces</taxon>
    </lineage>
</organism>